<gene>
    <name evidence="1" type="primary">panD</name>
    <name type="ordered locus">FRAAL6671</name>
</gene>
<accession>Q0RB93</accession>
<reference key="1">
    <citation type="journal article" date="2007" name="Genome Res.">
        <title>Genome characteristics of facultatively symbiotic Frankia sp. strains reflect host range and host plant biogeography.</title>
        <authorList>
            <person name="Normand P."/>
            <person name="Lapierre P."/>
            <person name="Tisa L.S."/>
            <person name="Gogarten J.P."/>
            <person name="Alloisio N."/>
            <person name="Bagnarol E."/>
            <person name="Bassi C.A."/>
            <person name="Berry A.M."/>
            <person name="Bickhart D.M."/>
            <person name="Choisne N."/>
            <person name="Couloux A."/>
            <person name="Cournoyer B."/>
            <person name="Cruveiller S."/>
            <person name="Daubin V."/>
            <person name="Demange N."/>
            <person name="Francino M.P."/>
            <person name="Goltsman E."/>
            <person name="Huang Y."/>
            <person name="Kopp O.R."/>
            <person name="Labarre L."/>
            <person name="Lapidus A."/>
            <person name="Lavire C."/>
            <person name="Marechal J."/>
            <person name="Martinez M."/>
            <person name="Mastronunzio J.E."/>
            <person name="Mullin B.C."/>
            <person name="Niemann J."/>
            <person name="Pujic P."/>
            <person name="Rawnsley T."/>
            <person name="Rouy Z."/>
            <person name="Schenowitz C."/>
            <person name="Sellstedt A."/>
            <person name="Tavares F."/>
            <person name="Tomkins J.P."/>
            <person name="Vallenet D."/>
            <person name="Valverde C."/>
            <person name="Wall L.G."/>
            <person name="Wang Y."/>
            <person name="Medigue C."/>
            <person name="Benson D.R."/>
        </authorList>
    </citation>
    <scope>NUCLEOTIDE SEQUENCE [LARGE SCALE GENOMIC DNA]</scope>
    <source>
        <strain>DSM 45986 / CECT 9034 / ACN14a</strain>
    </source>
</reference>
<comment type="function">
    <text evidence="1">Catalyzes the pyruvoyl-dependent decarboxylation of aspartate to produce beta-alanine.</text>
</comment>
<comment type="catalytic activity">
    <reaction evidence="1">
        <text>L-aspartate + H(+) = beta-alanine + CO2</text>
        <dbReference type="Rhea" id="RHEA:19497"/>
        <dbReference type="ChEBI" id="CHEBI:15378"/>
        <dbReference type="ChEBI" id="CHEBI:16526"/>
        <dbReference type="ChEBI" id="CHEBI:29991"/>
        <dbReference type="ChEBI" id="CHEBI:57966"/>
        <dbReference type="EC" id="4.1.1.11"/>
    </reaction>
</comment>
<comment type="cofactor">
    <cofactor evidence="1">
        <name>pyruvate</name>
        <dbReference type="ChEBI" id="CHEBI:15361"/>
    </cofactor>
    <text evidence="1">Binds 1 pyruvoyl group covalently per subunit.</text>
</comment>
<comment type="pathway">
    <text evidence="1">Cofactor biosynthesis; (R)-pantothenate biosynthesis; beta-alanine from L-aspartate: step 1/1.</text>
</comment>
<comment type="subunit">
    <text evidence="1">Heterooctamer of four alpha and four beta subunits.</text>
</comment>
<comment type="subcellular location">
    <subcellularLocation>
        <location evidence="1">Cytoplasm</location>
    </subcellularLocation>
</comment>
<comment type="PTM">
    <text evidence="1">Is synthesized initially as an inactive proenzyme, which is activated by self-cleavage at a specific serine bond to produce a beta-subunit with a hydroxyl group at its C-terminus and an alpha-subunit with a pyruvoyl group at its N-terminus.</text>
</comment>
<comment type="similarity">
    <text evidence="1">Belongs to the PanD family.</text>
</comment>
<comment type="sequence caution" evidence="3">
    <conflict type="erroneous initiation">
        <sequence resource="EMBL-CDS" id="CAJ65294"/>
    </conflict>
</comment>
<dbReference type="EC" id="4.1.1.11" evidence="1"/>
<dbReference type="EMBL" id="CT573213">
    <property type="protein sequence ID" value="CAJ65294.1"/>
    <property type="status" value="ALT_INIT"/>
    <property type="molecule type" value="Genomic_DNA"/>
</dbReference>
<dbReference type="RefSeq" id="WP_041939946.1">
    <property type="nucleotide sequence ID" value="NC_008278.1"/>
</dbReference>
<dbReference type="SMR" id="Q0RB93"/>
<dbReference type="STRING" id="326424.FRAAL6671"/>
<dbReference type="KEGG" id="fal:FRAAL6671"/>
<dbReference type="eggNOG" id="COG0853">
    <property type="taxonomic scope" value="Bacteria"/>
</dbReference>
<dbReference type="HOGENOM" id="CLU_115305_0_0_11"/>
<dbReference type="UniPathway" id="UPA00028">
    <property type="reaction ID" value="UER00002"/>
</dbReference>
<dbReference type="Proteomes" id="UP000000657">
    <property type="component" value="Chromosome"/>
</dbReference>
<dbReference type="GO" id="GO:0005829">
    <property type="term" value="C:cytosol"/>
    <property type="evidence" value="ECO:0007669"/>
    <property type="project" value="TreeGrafter"/>
</dbReference>
<dbReference type="GO" id="GO:0004068">
    <property type="term" value="F:aspartate 1-decarboxylase activity"/>
    <property type="evidence" value="ECO:0007669"/>
    <property type="project" value="UniProtKB-UniRule"/>
</dbReference>
<dbReference type="GO" id="GO:0006523">
    <property type="term" value="P:alanine biosynthetic process"/>
    <property type="evidence" value="ECO:0007669"/>
    <property type="project" value="InterPro"/>
</dbReference>
<dbReference type="GO" id="GO:0015940">
    <property type="term" value="P:pantothenate biosynthetic process"/>
    <property type="evidence" value="ECO:0007669"/>
    <property type="project" value="UniProtKB-UniRule"/>
</dbReference>
<dbReference type="CDD" id="cd06919">
    <property type="entry name" value="Asp_decarbox"/>
    <property type="match status" value="1"/>
</dbReference>
<dbReference type="Gene3D" id="2.40.40.20">
    <property type="match status" value="1"/>
</dbReference>
<dbReference type="HAMAP" id="MF_00446">
    <property type="entry name" value="PanD"/>
    <property type="match status" value="1"/>
</dbReference>
<dbReference type="InterPro" id="IPR009010">
    <property type="entry name" value="Asp_de-COase-like_dom_sf"/>
</dbReference>
<dbReference type="InterPro" id="IPR003190">
    <property type="entry name" value="Asp_decarbox"/>
</dbReference>
<dbReference type="NCBIfam" id="TIGR00223">
    <property type="entry name" value="panD"/>
    <property type="match status" value="1"/>
</dbReference>
<dbReference type="PANTHER" id="PTHR21012">
    <property type="entry name" value="ASPARTATE 1-DECARBOXYLASE"/>
    <property type="match status" value="1"/>
</dbReference>
<dbReference type="PANTHER" id="PTHR21012:SF0">
    <property type="entry name" value="ASPARTATE 1-DECARBOXYLASE"/>
    <property type="match status" value="1"/>
</dbReference>
<dbReference type="Pfam" id="PF02261">
    <property type="entry name" value="Asp_decarbox"/>
    <property type="match status" value="1"/>
</dbReference>
<dbReference type="SUPFAM" id="SSF50692">
    <property type="entry name" value="ADC-like"/>
    <property type="match status" value="1"/>
</dbReference>
<organism>
    <name type="scientific">Frankia alni (strain DSM 45986 / CECT 9034 / ACN14a)</name>
    <dbReference type="NCBI Taxonomy" id="326424"/>
    <lineage>
        <taxon>Bacteria</taxon>
        <taxon>Bacillati</taxon>
        <taxon>Actinomycetota</taxon>
        <taxon>Actinomycetes</taxon>
        <taxon>Frankiales</taxon>
        <taxon>Frankiaceae</taxon>
        <taxon>Frankia</taxon>
    </lineage>
</organism>
<proteinExistence type="inferred from homology"/>
<evidence type="ECO:0000255" key="1">
    <source>
        <dbReference type="HAMAP-Rule" id="MF_00446"/>
    </source>
</evidence>
<evidence type="ECO:0000256" key="2">
    <source>
        <dbReference type="SAM" id="MobiDB-lite"/>
    </source>
</evidence>
<evidence type="ECO:0000305" key="3"/>
<keyword id="KW-0068">Autocatalytic cleavage</keyword>
<keyword id="KW-0963">Cytoplasm</keyword>
<keyword id="KW-0210">Decarboxylase</keyword>
<keyword id="KW-0456">Lyase</keyword>
<keyword id="KW-0566">Pantothenate biosynthesis</keyword>
<keyword id="KW-0670">Pyruvate</keyword>
<keyword id="KW-1185">Reference proteome</keyword>
<keyword id="KW-0704">Schiff base</keyword>
<keyword id="KW-0865">Zymogen</keyword>
<sequence length="170" mass="17760">MLRTMLTAKIHRATVTQADLHYVGSVTIDADLLEAADLLPGEQVTIVDINNGARLETYAIAGPAGSGVIGINGAAARLVQPGDLVIIIAYGMMDDAEARRHVPRVLFVDAENRIIGRGHDPAEALPDDPSSLRGDLAVPGNPVTAAARRGTPTHQAPVALPASRTVVAPR</sequence>
<feature type="chain" id="PRO_0000306987" description="Aspartate 1-decarboxylase beta chain" evidence="1">
    <location>
        <begin position="1"/>
        <end position="24"/>
    </location>
</feature>
<feature type="chain" id="PRO_0000306988" description="Aspartate 1-decarboxylase alpha chain" evidence="1">
    <location>
        <begin position="25"/>
        <end position="170"/>
    </location>
</feature>
<feature type="region of interest" description="Disordered" evidence="2">
    <location>
        <begin position="118"/>
        <end position="170"/>
    </location>
</feature>
<feature type="active site" description="Schiff-base intermediate with substrate; via pyruvic acid" evidence="1">
    <location>
        <position position="25"/>
    </location>
</feature>
<feature type="active site" description="Proton donor" evidence="1">
    <location>
        <position position="58"/>
    </location>
</feature>
<feature type="binding site" evidence="1">
    <location>
        <position position="57"/>
    </location>
    <ligand>
        <name>substrate</name>
    </ligand>
</feature>
<feature type="binding site" evidence="1">
    <location>
        <begin position="73"/>
        <end position="75"/>
    </location>
    <ligand>
        <name>substrate</name>
    </ligand>
</feature>
<feature type="modified residue" description="Pyruvic acid (Ser)" evidence="1">
    <location>
        <position position="25"/>
    </location>
</feature>
<protein>
    <recommendedName>
        <fullName evidence="1">Aspartate 1-decarboxylase</fullName>
        <ecNumber evidence="1">4.1.1.11</ecNumber>
    </recommendedName>
    <alternativeName>
        <fullName evidence="1">Aspartate alpha-decarboxylase</fullName>
    </alternativeName>
    <component>
        <recommendedName>
            <fullName evidence="1">Aspartate 1-decarboxylase beta chain</fullName>
        </recommendedName>
    </component>
    <component>
        <recommendedName>
            <fullName evidence="1">Aspartate 1-decarboxylase alpha chain</fullName>
        </recommendedName>
    </component>
</protein>
<name>PAND_FRAAA</name>